<evidence type="ECO:0000255" key="1">
    <source>
        <dbReference type="HAMAP-Rule" id="MF_00182"/>
    </source>
</evidence>
<evidence type="ECO:0000305" key="2"/>
<organism>
    <name type="scientific">Synechocystis sp. (strain ATCC 27184 / PCC 6803 / Kazusa)</name>
    <dbReference type="NCBI Taxonomy" id="1111708"/>
    <lineage>
        <taxon>Bacteria</taxon>
        <taxon>Bacillati</taxon>
        <taxon>Cyanobacteriota</taxon>
        <taxon>Cyanophyceae</taxon>
        <taxon>Synechococcales</taxon>
        <taxon>Merismopediaceae</taxon>
        <taxon>Synechocystis</taxon>
    </lineage>
</organism>
<comment type="function">
    <text evidence="1">Attaches a formyl group to the free amino group of methionyl-tRNA(fMet). The formyl group appears to play a dual role in the initiator identity of N-formylmethionyl-tRNA by promoting its recognition by IF2 and preventing the misappropriation of this tRNA by the elongation apparatus.</text>
</comment>
<comment type="catalytic activity">
    <reaction evidence="1">
        <text>L-methionyl-tRNA(fMet) + (6R)-10-formyltetrahydrofolate = N-formyl-L-methionyl-tRNA(fMet) + (6S)-5,6,7,8-tetrahydrofolate + H(+)</text>
        <dbReference type="Rhea" id="RHEA:24380"/>
        <dbReference type="Rhea" id="RHEA-COMP:9952"/>
        <dbReference type="Rhea" id="RHEA-COMP:9953"/>
        <dbReference type="ChEBI" id="CHEBI:15378"/>
        <dbReference type="ChEBI" id="CHEBI:57453"/>
        <dbReference type="ChEBI" id="CHEBI:78530"/>
        <dbReference type="ChEBI" id="CHEBI:78844"/>
        <dbReference type="ChEBI" id="CHEBI:195366"/>
        <dbReference type="EC" id="2.1.2.9"/>
    </reaction>
</comment>
<comment type="similarity">
    <text evidence="1 2">Belongs to the Fmt family.</text>
</comment>
<protein>
    <recommendedName>
        <fullName evidence="1">Methionyl-tRNA formyltransferase</fullName>
        <ecNumber evidence="1">2.1.2.9</ecNumber>
    </recommendedName>
</protein>
<proteinExistence type="inferred from homology"/>
<gene>
    <name evidence="1" type="primary">fmt</name>
    <name type="ordered locus">slr0070</name>
</gene>
<feature type="chain" id="PRO_0000083070" description="Methionyl-tRNA formyltransferase">
    <location>
        <begin position="1"/>
        <end position="330"/>
    </location>
</feature>
<feature type="binding site" evidence="1">
    <location>
        <begin position="112"/>
        <end position="115"/>
    </location>
    <ligand>
        <name>(6S)-5,6,7,8-tetrahydrofolate</name>
        <dbReference type="ChEBI" id="CHEBI:57453"/>
    </ligand>
</feature>
<reference key="1">
    <citation type="journal article" date="1995" name="DNA Res.">
        <title>Sequence analysis of the genome of the unicellular cyanobacterium Synechocystis sp. strain PCC6803. I. Sequence features in the 1 Mb region from map positions 64% to 92% of the genome.</title>
        <authorList>
            <person name="Kaneko T."/>
            <person name="Tanaka A."/>
            <person name="Sato S."/>
            <person name="Kotani H."/>
            <person name="Sazuka T."/>
            <person name="Miyajima N."/>
            <person name="Sugiura M."/>
            <person name="Tabata S."/>
        </authorList>
    </citation>
    <scope>NUCLEOTIDE SEQUENCE [LARGE SCALE GENOMIC DNA]</scope>
    <source>
        <strain>ATCC 27184 / PCC 6803 / N-1</strain>
    </source>
</reference>
<reference key="2">
    <citation type="journal article" date="1996" name="DNA Res.">
        <title>Sequence analysis of the genome of the unicellular cyanobacterium Synechocystis sp. strain PCC6803. II. Sequence determination of the entire genome and assignment of potential protein-coding regions.</title>
        <authorList>
            <person name="Kaneko T."/>
            <person name="Sato S."/>
            <person name="Kotani H."/>
            <person name="Tanaka A."/>
            <person name="Asamizu E."/>
            <person name="Nakamura Y."/>
            <person name="Miyajima N."/>
            <person name="Hirosawa M."/>
            <person name="Sugiura M."/>
            <person name="Sasamoto S."/>
            <person name="Kimura T."/>
            <person name="Hosouchi T."/>
            <person name="Matsuno A."/>
            <person name="Muraki A."/>
            <person name="Nakazaki N."/>
            <person name="Naruo K."/>
            <person name="Okumura S."/>
            <person name="Shimpo S."/>
            <person name="Takeuchi C."/>
            <person name="Wada T."/>
            <person name="Watanabe A."/>
            <person name="Yamada M."/>
            <person name="Yasuda M."/>
            <person name="Tabata S."/>
        </authorList>
    </citation>
    <scope>NUCLEOTIDE SEQUENCE [LARGE SCALE GENOMIC DNA]</scope>
    <source>
        <strain>ATCC 27184 / PCC 6803 / Kazusa</strain>
    </source>
</reference>
<keyword id="KW-0648">Protein biosynthesis</keyword>
<keyword id="KW-1185">Reference proteome</keyword>
<keyword id="KW-0808">Transferase</keyword>
<name>FMT_SYNY3</name>
<sequence>MMKTVFFGTPDFAVPTLEALLGHPDIDVLAVVSQPDRRRGRGSKLIPSPVKEVAVQAGIPVWQPERVKRCQETLAKLKNCQADFFVVVAYGQLLSPEILVMPRLGCVNVHGSLLPKYRGAAPLQWAIANGETETGVTTMLMDEGMDTGAMLLKTTTPIGLMDNLTAIGDRLARSGAELLVQTLKDLDAGQLQPIPQTETEATYAPLLKKGDFVINWHRSALEIHNQVRGFAPACHTAWGEQILKIISTVPLGAEFFPLLPEKYQDLATAYLNYSLEAGEPGNIIGTIKNWGPVLETGNGHLLLEQVQPPGKKPQSGWDFINGNRSTISFA</sequence>
<dbReference type="EC" id="2.1.2.9" evidence="1"/>
<dbReference type="EMBL" id="BA000022">
    <property type="protein sequence ID" value="BAA10301.1"/>
    <property type="molecule type" value="Genomic_DNA"/>
</dbReference>
<dbReference type="PIR" id="S74383">
    <property type="entry name" value="S74383"/>
</dbReference>
<dbReference type="SMR" id="Q55163"/>
<dbReference type="FunCoup" id="Q55163">
    <property type="interactions" value="456"/>
</dbReference>
<dbReference type="STRING" id="1148.gene:10499801"/>
<dbReference type="PaxDb" id="1148-1001159"/>
<dbReference type="EnsemblBacteria" id="BAA10301">
    <property type="protein sequence ID" value="BAA10301"/>
    <property type="gene ID" value="BAA10301"/>
</dbReference>
<dbReference type="KEGG" id="syn:slr0070"/>
<dbReference type="eggNOG" id="COG0223">
    <property type="taxonomic scope" value="Bacteria"/>
</dbReference>
<dbReference type="InParanoid" id="Q55163"/>
<dbReference type="PhylomeDB" id="Q55163"/>
<dbReference type="Proteomes" id="UP000001425">
    <property type="component" value="Chromosome"/>
</dbReference>
<dbReference type="GO" id="GO:0005737">
    <property type="term" value="C:cytoplasm"/>
    <property type="evidence" value="ECO:0000318"/>
    <property type="project" value="GO_Central"/>
</dbReference>
<dbReference type="GO" id="GO:0005829">
    <property type="term" value="C:cytosol"/>
    <property type="evidence" value="ECO:0000318"/>
    <property type="project" value="GO_Central"/>
</dbReference>
<dbReference type="GO" id="GO:0004479">
    <property type="term" value="F:methionyl-tRNA formyltransferase activity"/>
    <property type="evidence" value="ECO:0007669"/>
    <property type="project" value="UniProtKB-UniRule"/>
</dbReference>
<dbReference type="GO" id="GO:0004644">
    <property type="term" value="F:phosphoribosylglycinamide formyltransferase activity"/>
    <property type="evidence" value="ECO:0000318"/>
    <property type="project" value="GO_Central"/>
</dbReference>
<dbReference type="GO" id="GO:0006189">
    <property type="term" value="P:'de novo' IMP biosynthetic process"/>
    <property type="evidence" value="ECO:0000318"/>
    <property type="project" value="GO_Central"/>
</dbReference>
<dbReference type="CDD" id="cd08646">
    <property type="entry name" value="FMT_core_Met-tRNA-FMT_N"/>
    <property type="match status" value="1"/>
</dbReference>
<dbReference type="CDD" id="cd08704">
    <property type="entry name" value="Met_tRNA_FMT_C"/>
    <property type="match status" value="1"/>
</dbReference>
<dbReference type="FunFam" id="3.40.50.12230:FF:000001">
    <property type="entry name" value="Methionyl-tRNA formyltransferase"/>
    <property type="match status" value="1"/>
</dbReference>
<dbReference type="Gene3D" id="3.40.50.12230">
    <property type="match status" value="1"/>
</dbReference>
<dbReference type="HAMAP" id="MF_00182">
    <property type="entry name" value="Formyl_trans"/>
    <property type="match status" value="1"/>
</dbReference>
<dbReference type="InterPro" id="IPR005794">
    <property type="entry name" value="Fmt"/>
</dbReference>
<dbReference type="InterPro" id="IPR005793">
    <property type="entry name" value="Formyl_trans_C"/>
</dbReference>
<dbReference type="InterPro" id="IPR002376">
    <property type="entry name" value="Formyl_transf_N"/>
</dbReference>
<dbReference type="InterPro" id="IPR036477">
    <property type="entry name" value="Formyl_transf_N_sf"/>
</dbReference>
<dbReference type="InterPro" id="IPR011034">
    <property type="entry name" value="Formyl_transferase-like_C_sf"/>
</dbReference>
<dbReference type="InterPro" id="IPR001555">
    <property type="entry name" value="GART_AS"/>
</dbReference>
<dbReference type="InterPro" id="IPR044135">
    <property type="entry name" value="Met-tRNA-FMT_C"/>
</dbReference>
<dbReference type="InterPro" id="IPR041711">
    <property type="entry name" value="Met-tRNA-FMT_N"/>
</dbReference>
<dbReference type="NCBIfam" id="TIGR00460">
    <property type="entry name" value="fmt"/>
    <property type="match status" value="1"/>
</dbReference>
<dbReference type="PANTHER" id="PTHR11138">
    <property type="entry name" value="METHIONYL-TRNA FORMYLTRANSFERASE"/>
    <property type="match status" value="1"/>
</dbReference>
<dbReference type="PANTHER" id="PTHR11138:SF5">
    <property type="entry name" value="METHIONYL-TRNA FORMYLTRANSFERASE, MITOCHONDRIAL"/>
    <property type="match status" value="1"/>
</dbReference>
<dbReference type="Pfam" id="PF02911">
    <property type="entry name" value="Formyl_trans_C"/>
    <property type="match status" value="1"/>
</dbReference>
<dbReference type="Pfam" id="PF00551">
    <property type="entry name" value="Formyl_trans_N"/>
    <property type="match status" value="1"/>
</dbReference>
<dbReference type="SUPFAM" id="SSF50486">
    <property type="entry name" value="FMT C-terminal domain-like"/>
    <property type="match status" value="1"/>
</dbReference>
<dbReference type="SUPFAM" id="SSF53328">
    <property type="entry name" value="Formyltransferase"/>
    <property type="match status" value="1"/>
</dbReference>
<dbReference type="PROSITE" id="PS00373">
    <property type="entry name" value="GART"/>
    <property type="match status" value="1"/>
</dbReference>
<accession>Q55163</accession>